<keyword id="KW-0150">Chloroplast</keyword>
<keyword id="KW-0934">Plastid</keyword>
<keyword id="KW-0687">Ribonucleoprotein</keyword>
<keyword id="KW-0689">Ribosomal protein</keyword>
<keyword id="KW-0694">RNA-binding</keyword>
<keyword id="KW-0699">rRNA-binding</keyword>
<feature type="chain" id="PRO_0000132565" description="Small ribosomal subunit protein uS4c">
    <location>
        <begin position="1"/>
        <end position="196" status="greater than"/>
    </location>
</feature>
<feature type="domain" description="S4 RNA-binding">
    <location>
        <begin position="89"/>
        <end position="152"/>
    </location>
</feature>
<feature type="region of interest" description="Disordered" evidence="2">
    <location>
        <begin position="20"/>
        <end position="39"/>
    </location>
</feature>
<feature type="non-terminal residue">
    <location>
        <position position="196"/>
    </location>
</feature>
<protein>
    <recommendedName>
        <fullName evidence="3">Small ribosomal subunit protein uS4c</fullName>
    </recommendedName>
    <alternativeName>
        <fullName>30S ribosomal protein S4, chloroplastic</fullName>
    </alternativeName>
</protein>
<accession>P36454</accession>
<comment type="function">
    <text evidence="1">One of the primary rRNA binding proteins, it binds directly to 16S rRNA where it nucleates assembly of the body of the 30S subunit.</text>
</comment>
<comment type="function">
    <text evidence="1">With S5 and S12 plays an important role in translational accuracy.</text>
</comment>
<comment type="subunit">
    <text evidence="1">Part of the 30S ribosomal subunit. Contacts protein S5. The interaction surface between S4 and S5 is involved in control of translational fidelity (By similarity).</text>
</comment>
<comment type="subcellular location">
    <subcellularLocation>
        <location>Plastid</location>
        <location>Chloroplast</location>
    </subcellularLocation>
</comment>
<comment type="similarity">
    <text evidence="3">Belongs to the universal ribosomal protein uS4 family.</text>
</comment>
<name>RR4_DENGI</name>
<geneLocation type="chloroplast"/>
<organism>
    <name type="scientific">Dendrocalamus giganteus</name>
    <name type="common">Giant bamboo</name>
    <dbReference type="NCBI Taxonomy" id="29671"/>
    <lineage>
        <taxon>Eukaryota</taxon>
        <taxon>Viridiplantae</taxon>
        <taxon>Streptophyta</taxon>
        <taxon>Embryophyta</taxon>
        <taxon>Tracheophyta</taxon>
        <taxon>Spermatophyta</taxon>
        <taxon>Magnoliopsida</taxon>
        <taxon>Liliopsida</taxon>
        <taxon>Poales</taxon>
        <taxon>Poaceae</taxon>
        <taxon>BOP clade</taxon>
        <taxon>Bambusoideae</taxon>
        <taxon>Bambusodae</taxon>
        <taxon>Bambuseae</taxon>
        <taxon>Bambusinae</taxon>
        <taxon>Dendrocalamus</taxon>
    </lineage>
</organism>
<gene>
    <name type="primary">rps4</name>
</gene>
<evidence type="ECO:0000250" key="1"/>
<evidence type="ECO:0000256" key="2">
    <source>
        <dbReference type="SAM" id="MobiDB-lite"/>
    </source>
</evidence>
<evidence type="ECO:0000305" key="3"/>
<dbReference type="EMBL" id="Z29235">
    <property type="protein sequence ID" value="CAA82434.1"/>
    <property type="molecule type" value="Genomic_DNA"/>
</dbReference>
<dbReference type="PIR" id="S41264">
    <property type="entry name" value="S41264"/>
</dbReference>
<dbReference type="SMR" id="P36454"/>
<dbReference type="GO" id="GO:0009507">
    <property type="term" value="C:chloroplast"/>
    <property type="evidence" value="ECO:0007669"/>
    <property type="project" value="UniProtKB-SubCell"/>
</dbReference>
<dbReference type="GO" id="GO:0015935">
    <property type="term" value="C:small ribosomal subunit"/>
    <property type="evidence" value="ECO:0007669"/>
    <property type="project" value="InterPro"/>
</dbReference>
<dbReference type="GO" id="GO:0019843">
    <property type="term" value="F:rRNA binding"/>
    <property type="evidence" value="ECO:0007669"/>
    <property type="project" value="UniProtKB-KW"/>
</dbReference>
<dbReference type="GO" id="GO:0003735">
    <property type="term" value="F:structural constituent of ribosome"/>
    <property type="evidence" value="ECO:0007669"/>
    <property type="project" value="InterPro"/>
</dbReference>
<dbReference type="GO" id="GO:0042274">
    <property type="term" value="P:ribosomal small subunit biogenesis"/>
    <property type="evidence" value="ECO:0007669"/>
    <property type="project" value="TreeGrafter"/>
</dbReference>
<dbReference type="GO" id="GO:0006412">
    <property type="term" value="P:translation"/>
    <property type="evidence" value="ECO:0007669"/>
    <property type="project" value="InterPro"/>
</dbReference>
<dbReference type="CDD" id="cd00165">
    <property type="entry name" value="S4"/>
    <property type="match status" value="1"/>
</dbReference>
<dbReference type="FunFam" id="1.10.1050.10:FF:000002">
    <property type="entry name" value="30S ribosomal protein S4, chloroplastic"/>
    <property type="match status" value="1"/>
</dbReference>
<dbReference type="FunFam" id="3.10.290.10:FF:000081">
    <property type="entry name" value="30S ribosomal protein S4, chloroplastic"/>
    <property type="match status" value="1"/>
</dbReference>
<dbReference type="Gene3D" id="1.10.1050.10">
    <property type="entry name" value="Ribosomal Protein S4 Delta 41, Chain A, domain 1"/>
    <property type="match status" value="1"/>
</dbReference>
<dbReference type="Gene3D" id="3.10.290.10">
    <property type="entry name" value="RNA-binding S4 domain"/>
    <property type="match status" value="1"/>
</dbReference>
<dbReference type="HAMAP" id="MF_01306_B">
    <property type="entry name" value="Ribosomal_uS4_B"/>
    <property type="match status" value="1"/>
</dbReference>
<dbReference type="InterPro" id="IPR022801">
    <property type="entry name" value="Ribosomal_uS4"/>
</dbReference>
<dbReference type="InterPro" id="IPR005709">
    <property type="entry name" value="Ribosomal_uS4_bac-type"/>
</dbReference>
<dbReference type="InterPro" id="IPR018079">
    <property type="entry name" value="Ribosomal_uS4_CS"/>
</dbReference>
<dbReference type="InterPro" id="IPR001912">
    <property type="entry name" value="Ribosomal_uS4_N"/>
</dbReference>
<dbReference type="InterPro" id="IPR002942">
    <property type="entry name" value="S4_RNA-bd"/>
</dbReference>
<dbReference type="InterPro" id="IPR036986">
    <property type="entry name" value="S4_RNA-bd_sf"/>
</dbReference>
<dbReference type="NCBIfam" id="NF003717">
    <property type="entry name" value="PRK05327.1"/>
    <property type="match status" value="1"/>
</dbReference>
<dbReference type="NCBIfam" id="TIGR01017">
    <property type="entry name" value="rpsD_bact"/>
    <property type="match status" value="1"/>
</dbReference>
<dbReference type="PANTHER" id="PTHR11831">
    <property type="entry name" value="30S 40S RIBOSOMAL PROTEIN"/>
    <property type="match status" value="1"/>
</dbReference>
<dbReference type="PANTHER" id="PTHR11831:SF4">
    <property type="entry name" value="SMALL RIBOSOMAL SUBUNIT PROTEIN US4M"/>
    <property type="match status" value="1"/>
</dbReference>
<dbReference type="Pfam" id="PF00163">
    <property type="entry name" value="Ribosomal_S4"/>
    <property type="match status" value="1"/>
</dbReference>
<dbReference type="Pfam" id="PF01479">
    <property type="entry name" value="S4"/>
    <property type="match status" value="1"/>
</dbReference>
<dbReference type="SMART" id="SM01390">
    <property type="entry name" value="Ribosomal_S4"/>
    <property type="match status" value="1"/>
</dbReference>
<dbReference type="SMART" id="SM00363">
    <property type="entry name" value="S4"/>
    <property type="match status" value="1"/>
</dbReference>
<dbReference type="SUPFAM" id="SSF55174">
    <property type="entry name" value="Alpha-L RNA-binding motif"/>
    <property type="match status" value="1"/>
</dbReference>
<dbReference type="PROSITE" id="PS00632">
    <property type="entry name" value="RIBOSOMAL_S4"/>
    <property type="match status" value="1"/>
</dbReference>
<dbReference type="PROSITE" id="PS50889">
    <property type="entry name" value="S4"/>
    <property type="match status" value="1"/>
</dbReference>
<sequence length="196" mass="22902">MSRYRGPRFKKIRRLGALPGLTRKTPKSGSNLKKKFHSGKKEQYRIRLQEKQKLRFHYGLTERQLLRYVHIAGKAKRSTGQVLLQLLEMRLDNILFRLGMASTIPEARQLVNHRHILVNRRIVDIPSFRCKPRDIITTKDNQRSKCLVQNSIASSDPGKLPKHLTIDTLQYKGLVKKILDRKWVGLKINELLVVEY</sequence>
<proteinExistence type="inferred from homology"/>
<reference key="1">
    <citation type="journal article" date="1994" name="Plant Syst. Evol.">
        <title>The chloroplast gene rps4 as a tool for the study of Poaceae phylogeny.</title>
        <authorList>
            <person name="Nadot S."/>
            <person name="Bajon R."/>
            <person name="Lejeune B."/>
        </authorList>
        <dbReference type="AGRICOLA" id="IND20417698"/>
    </citation>
    <scope>NUCLEOTIDE SEQUENCE [GENOMIC DNA]</scope>
</reference>